<proteinExistence type="inferred from homology"/>
<gene>
    <name evidence="1" type="primary">gcvH</name>
    <name type="ordered locus">Sbal223_3618</name>
</gene>
<sequence>MSNIPTELKYASSHEWIRKEEDGSYTVGITEHAQELLGDMVFVELPEVGDTVTAGEDCAVAESVKAASDIYAPISGEVIAVNEALEDSPELVNSSAYGEGWFFRVMPSDESEVDALLDAEGYQAVIDED</sequence>
<name>GCSH_SHEB2</name>
<dbReference type="EMBL" id="CP001252">
    <property type="protein sequence ID" value="ACK48097.1"/>
    <property type="molecule type" value="Genomic_DNA"/>
</dbReference>
<dbReference type="RefSeq" id="WP_006080188.1">
    <property type="nucleotide sequence ID" value="NC_011663.1"/>
</dbReference>
<dbReference type="SMR" id="B8EB46"/>
<dbReference type="GeneID" id="11773816"/>
<dbReference type="KEGG" id="sbp:Sbal223_3618"/>
<dbReference type="HOGENOM" id="CLU_097408_2_1_6"/>
<dbReference type="Proteomes" id="UP000002507">
    <property type="component" value="Chromosome"/>
</dbReference>
<dbReference type="GO" id="GO:0005829">
    <property type="term" value="C:cytosol"/>
    <property type="evidence" value="ECO:0007669"/>
    <property type="project" value="TreeGrafter"/>
</dbReference>
<dbReference type="GO" id="GO:0005960">
    <property type="term" value="C:glycine cleavage complex"/>
    <property type="evidence" value="ECO:0007669"/>
    <property type="project" value="InterPro"/>
</dbReference>
<dbReference type="GO" id="GO:0019464">
    <property type="term" value="P:glycine decarboxylation via glycine cleavage system"/>
    <property type="evidence" value="ECO:0007669"/>
    <property type="project" value="UniProtKB-UniRule"/>
</dbReference>
<dbReference type="CDD" id="cd06848">
    <property type="entry name" value="GCS_H"/>
    <property type="match status" value="1"/>
</dbReference>
<dbReference type="FunFam" id="2.40.50.100:FF:000011">
    <property type="entry name" value="Glycine cleavage system H protein"/>
    <property type="match status" value="1"/>
</dbReference>
<dbReference type="Gene3D" id="2.40.50.100">
    <property type="match status" value="1"/>
</dbReference>
<dbReference type="HAMAP" id="MF_00272">
    <property type="entry name" value="GcvH"/>
    <property type="match status" value="1"/>
</dbReference>
<dbReference type="InterPro" id="IPR003016">
    <property type="entry name" value="2-oxoA_DH_lipoyl-BS"/>
</dbReference>
<dbReference type="InterPro" id="IPR000089">
    <property type="entry name" value="Biotin_lipoyl"/>
</dbReference>
<dbReference type="InterPro" id="IPR002930">
    <property type="entry name" value="GCV_H"/>
</dbReference>
<dbReference type="InterPro" id="IPR033753">
    <property type="entry name" value="GCV_H/Fam206"/>
</dbReference>
<dbReference type="InterPro" id="IPR017453">
    <property type="entry name" value="GCV_H_sub"/>
</dbReference>
<dbReference type="InterPro" id="IPR011053">
    <property type="entry name" value="Single_hybrid_motif"/>
</dbReference>
<dbReference type="NCBIfam" id="TIGR00527">
    <property type="entry name" value="gcvH"/>
    <property type="match status" value="1"/>
</dbReference>
<dbReference type="NCBIfam" id="NF002270">
    <property type="entry name" value="PRK01202.1"/>
    <property type="match status" value="1"/>
</dbReference>
<dbReference type="PANTHER" id="PTHR11715">
    <property type="entry name" value="GLYCINE CLEAVAGE SYSTEM H PROTEIN"/>
    <property type="match status" value="1"/>
</dbReference>
<dbReference type="PANTHER" id="PTHR11715:SF3">
    <property type="entry name" value="GLYCINE CLEAVAGE SYSTEM H PROTEIN-RELATED"/>
    <property type="match status" value="1"/>
</dbReference>
<dbReference type="Pfam" id="PF01597">
    <property type="entry name" value="GCV_H"/>
    <property type="match status" value="1"/>
</dbReference>
<dbReference type="SUPFAM" id="SSF51230">
    <property type="entry name" value="Single hybrid motif"/>
    <property type="match status" value="1"/>
</dbReference>
<dbReference type="PROSITE" id="PS50968">
    <property type="entry name" value="BIOTINYL_LIPOYL"/>
    <property type="match status" value="1"/>
</dbReference>
<dbReference type="PROSITE" id="PS00189">
    <property type="entry name" value="LIPOYL"/>
    <property type="match status" value="1"/>
</dbReference>
<reference key="1">
    <citation type="submission" date="2008-12" db="EMBL/GenBank/DDBJ databases">
        <title>Complete sequence of chromosome of Shewanella baltica OS223.</title>
        <authorList>
            <consortium name="US DOE Joint Genome Institute"/>
            <person name="Lucas S."/>
            <person name="Copeland A."/>
            <person name="Lapidus A."/>
            <person name="Glavina del Rio T."/>
            <person name="Dalin E."/>
            <person name="Tice H."/>
            <person name="Bruce D."/>
            <person name="Goodwin L."/>
            <person name="Pitluck S."/>
            <person name="Chertkov O."/>
            <person name="Meincke L."/>
            <person name="Brettin T."/>
            <person name="Detter J.C."/>
            <person name="Han C."/>
            <person name="Kuske C.R."/>
            <person name="Larimer F."/>
            <person name="Land M."/>
            <person name="Hauser L."/>
            <person name="Kyrpides N."/>
            <person name="Ovchinnikova G."/>
            <person name="Brettar I."/>
            <person name="Rodrigues J."/>
            <person name="Konstantinidis K."/>
            <person name="Tiedje J."/>
        </authorList>
    </citation>
    <scope>NUCLEOTIDE SEQUENCE [LARGE SCALE GENOMIC DNA]</scope>
    <source>
        <strain>OS223</strain>
    </source>
</reference>
<comment type="function">
    <text evidence="1">The glycine cleavage system catalyzes the degradation of glycine. The H protein shuttles the methylamine group of glycine from the P protein to the T protein.</text>
</comment>
<comment type="cofactor">
    <cofactor evidence="1">
        <name>(R)-lipoate</name>
        <dbReference type="ChEBI" id="CHEBI:83088"/>
    </cofactor>
    <text evidence="1">Binds 1 lipoyl cofactor covalently.</text>
</comment>
<comment type="subunit">
    <text evidence="1">The glycine cleavage system is composed of four proteins: P, T, L and H.</text>
</comment>
<comment type="similarity">
    <text evidence="1">Belongs to the GcvH family.</text>
</comment>
<evidence type="ECO:0000255" key="1">
    <source>
        <dbReference type="HAMAP-Rule" id="MF_00272"/>
    </source>
</evidence>
<evidence type="ECO:0000255" key="2">
    <source>
        <dbReference type="PROSITE-ProRule" id="PRU01066"/>
    </source>
</evidence>
<keyword id="KW-0450">Lipoyl</keyword>
<accession>B8EB46</accession>
<organism>
    <name type="scientific">Shewanella baltica (strain OS223)</name>
    <dbReference type="NCBI Taxonomy" id="407976"/>
    <lineage>
        <taxon>Bacteria</taxon>
        <taxon>Pseudomonadati</taxon>
        <taxon>Pseudomonadota</taxon>
        <taxon>Gammaproteobacteria</taxon>
        <taxon>Alteromonadales</taxon>
        <taxon>Shewanellaceae</taxon>
        <taxon>Shewanella</taxon>
    </lineage>
</organism>
<feature type="chain" id="PRO_1000132431" description="Glycine cleavage system H protein">
    <location>
        <begin position="1"/>
        <end position="129"/>
    </location>
</feature>
<feature type="domain" description="Lipoyl-binding" evidence="2">
    <location>
        <begin position="24"/>
        <end position="106"/>
    </location>
</feature>
<feature type="modified residue" description="N6-lipoyllysine" evidence="1">
    <location>
        <position position="65"/>
    </location>
</feature>
<protein>
    <recommendedName>
        <fullName evidence="1">Glycine cleavage system H protein</fullName>
    </recommendedName>
</protein>